<comment type="function">
    <text evidence="1">Converts alpha-N-acetylneuranimic acid (Neu5Ac) to the beta-anomer, accelerating the equilibrium between the alpha- and beta-anomers. Probably facilitates sialidase-negative bacteria to compete successfully for limited amounts of extracellular Neu5Ac, which is likely taken up in the beta-anomer. In addition, the rapid removal of sialic acid from solution might be advantageous to the bacterium to damp down host responses.</text>
</comment>
<comment type="catalytic activity">
    <reaction evidence="1">
        <text>N-acetyl-alpha-neuraminate = N-acetyl-beta-neuraminate</text>
        <dbReference type="Rhea" id="RHEA:25233"/>
        <dbReference type="ChEBI" id="CHEBI:58705"/>
        <dbReference type="ChEBI" id="CHEBI:58770"/>
        <dbReference type="EC" id="5.1.3.24"/>
    </reaction>
</comment>
<comment type="subunit">
    <text evidence="1">Homodimer.</text>
</comment>
<comment type="subcellular location">
    <subcellularLocation>
        <location evidence="1">Periplasm</location>
    </subcellularLocation>
</comment>
<comment type="similarity">
    <text evidence="1">Belongs to the NanM family.</text>
</comment>
<comment type="sequence caution" evidence="2">
    <conflict type="erroneous initiation">
        <sequence resource="EMBL-CDS" id="AAN45632"/>
    </conflict>
</comment>
<comment type="sequence caution" evidence="2">
    <conflict type="erroneous initiation">
        <sequence resource="EMBL-CDS" id="AAP19418"/>
    </conflict>
</comment>
<accession>Q83IN1</accession>
<accession>Q7UAQ6</accession>
<protein>
    <recommendedName>
        <fullName evidence="1">N-acetylneuraminate epimerase</fullName>
        <ecNumber evidence="1">5.1.3.24</ecNumber>
    </recommendedName>
    <alternativeName>
        <fullName evidence="1">N-acetylneuraminate mutarotase</fullName>
        <shortName evidence="1">Neu5Ac mutarotase</shortName>
    </alternativeName>
    <alternativeName>
        <fullName evidence="1">Sialic acid epimerase</fullName>
    </alternativeName>
</protein>
<name>NANM_SHIFL</name>
<evidence type="ECO:0000255" key="1">
    <source>
        <dbReference type="HAMAP-Rule" id="MF_01195"/>
    </source>
</evidence>
<evidence type="ECO:0000305" key="2"/>
<proteinExistence type="inferred from homology"/>
<sequence>MNKTIMALAIMMASFAANASVLPETPVPFKSGTGAIDNDTVYIGLGSAGTAWYKLDTQAKDKKWTALAAFPGGPREQATSAFIDGNLYVFGGIGKNSEGLTQVFNDVHKYNPKTNSWVKLMSHAPMGMAGHVTFVHNGKAYVTGGVNQNIFNGYFEDLNEAGKDSTAIDKINAHYFDKKAEDYFFNKFLLSFDPSTQQWSYAGESPWYGTAGAAVVNKGDKTWLINGEAKPGLRTDAVFELDFTGNNLKWNKLDPVSSPDGVAGGFAGISNDSLIFAGGAGFKGSRENYQNGKNYAHEGLKKSYSTDIHLWHNGKWDKSGELSQGRAYGVSLPWNNSLLIIGGETAGGKAVTDSVLISVKDNKVTVQN</sequence>
<keyword id="KW-0119">Carbohydrate metabolism</keyword>
<keyword id="KW-0413">Isomerase</keyword>
<keyword id="KW-0880">Kelch repeat</keyword>
<keyword id="KW-0574">Periplasm</keyword>
<keyword id="KW-1185">Reference proteome</keyword>
<keyword id="KW-0677">Repeat</keyword>
<keyword id="KW-0732">Signal</keyword>
<feature type="signal peptide" evidence="1">
    <location>
        <begin position="1"/>
        <end position="19"/>
    </location>
</feature>
<feature type="chain" id="PRO_0000333070" description="N-acetylneuraminate epimerase">
    <location>
        <begin position="20"/>
        <end position="368"/>
    </location>
</feature>
<feature type="repeat" description="Kelch 1">
    <location>
        <begin position="40"/>
        <end position="84"/>
    </location>
</feature>
<feature type="repeat" description="Kelch 2">
    <location>
        <begin position="86"/>
        <end position="137"/>
    </location>
</feature>
<feature type="repeat" description="Kelch 3">
    <location>
        <begin position="139"/>
        <end position="173"/>
    </location>
</feature>
<feature type="repeat" description="Kelch 4">
    <location>
        <begin position="174"/>
        <end position="219"/>
    </location>
</feature>
<feature type="repeat" description="Kelch 5">
    <location>
        <begin position="222"/>
        <end position="265"/>
    </location>
</feature>
<feature type="repeat" description="Kelch 6">
    <location>
        <begin position="287"/>
        <end position="336"/>
    </location>
</feature>
<feature type="repeat" description="Kelch 7">
    <location>
        <begin position="338"/>
        <end position="367"/>
    </location>
</feature>
<feature type="active site" description="Proton acceptor" evidence="1">
    <location>
        <position position="228"/>
    </location>
</feature>
<organism>
    <name type="scientific">Shigella flexneri</name>
    <dbReference type="NCBI Taxonomy" id="623"/>
    <lineage>
        <taxon>Bacteria</taxon>
        <taxon>Pseudomonadati</taxon>
        <taxon>Pseudomonadota</taxon>
        <taxon>Gammaproteobacteria</taxon>
        <taxon>Enterobacterales</taxon>
        <taxon>Enterobacteriaceae</taxon>
        <taxon>Shigella</taxon>
    </lineage>
</organism>
<reference key="1">
    <citation type="journal article" date="2002" name="Nucleic Acids Res.">
        <title>Genome sequence of Shigella flexneri 2a: insights into pathogenicity through comparison with genomes of Escherichia coli K12 and O157.</title>
        <authorList>
            <person name="Jin Q."/>
            <person name="Yuan Z."/>
            <person name="Xu J."/>
            <person name="Wang Y."/>
            <person name="Shen Y."/>
            <person name="Lu W."/>
            <person name="Wang J."/>
            <person name="Liu H."/>
            <person name="Yang J."/>
            <person name="Yang F."/>
            <person name="Zhang X."/>
            <person name="Zhang J."/>
            <person name="Yang G."/>
            <person name="Wu H."/>
            <person name="Qu D."/>
            <person name="Dong J."/>
            <person name="Sun L."/>
            <person name="Xue Y."/>
            <person name="Zhao A."/>
            <person name="Gao Y."/>
            <person name="Zhu J."/>
            <person name="Kan B."/>
            <person name="Ding K."/>
            <person name="Chen S."/>
            <person name="Cheng H."/>
            <person name="Yao Z."/>
            <person name="He B."/>
            <person name="Chen R."/>
            <person name="Ma D."/>
            <person name="Qiang B."/>
            <person name="Wen Y."/>
            <person name="Hou Y."/>
            <person name="Yu J."/>
        </authorList>
    </citation>
    <scope>NUCLEOTIDE SEQUENCE [LARGE SCALE GENOMIC DNA]</scope>
    <source>
        <strain>301 / Serotype 2a</strain>
    </source>
</reference>
<reference key="2">
    <citation type="journal article" date="2003" name="Infect. Immun.">
        <title>Complete genome sequence and comparative genomics of Shigella flexneri serotype 2a strain 2457T.</title>
        <authorList>
            <person name="Wei J."/>
            <person name="Goldberg M.B."/>
            <person name="Burland V."/>
            <person name="Venkatesan M.M."/>
            <person name="Deng W."/>
            <person name="Fournier G."/>
            <person name="Mayhew G.F."/>
            <person name="Plunkett G. III"/>
            <person name="Rose D.J."/>
            <person name="Darling A."/>
            <person name="Mau B."/>
            <person name="Perna N.T."/>
            <person name="Payne S.M."/>
            <person name="Runyen-Janecky L.J."/>
            <person name="Zhou S."/>
            <person name="Schwartz D.C."/>
            <person name="Blattner F.R."/>
        </authorList>
    </citation>
    <scope>NUCLEOTIDE SEQUENCE [LARGE SCALE GENOMIC DNA]</scope>
    <source>
        <strain>ATCC 700930 / 2457T / Serotype 2a</strain>
    </source>
</reference>
<dbReference type="EC" id="5.1.3.24" evidence="1"/>
<dbReference type="EMBL" id="AE005674">
    <property type="protein sequence ID" value="AAN45632.2"/>
    <property type="status" value="ALT_INIT"/>
    <property type="molecule type" value="Genomic_DNA"/>
</dbReference>
<dbReference type="EMBL" id="AE014073">
    <property type="protein sequence ID" value="AAP19418.1"/>
    <property type="status" value="ALT_INIT"/>
    <property type="molecule type" value="Genomic_DNA"/>
</dbReference>
<dbReference type="RefSeq" id="WP_005048917.1">
    <property type="nucleotide sequence ID" value="NZ_WPGW01000210.1"/>
</dbReference>
<dbReference type="SMR" id="Q83IN1"/>
<dbReference type="STRING" id="198214.SF4212"/>
<dbReference type="PaxDb" id="198214-SF4212"/>
<dbReference type="KEGG" id="sfl:SF4212"/>
<dbReference type="KEGG" id="sfx:S4469"/>
<dbReference type="PATRIC" id="fig|198214.7.peg.4968"/>
<dbReference type="HOGENOM" id="CLU_061535_0_0_6"/>
<dbReference type="Proteomes" id="UP000001006">
    <property type="component" value="Chromosome"/>
</dbReference>
<dbReference type="Proteomes" id="UP000002673">
    <property type="component" value="Chromosome"/>
</dbReference>
<dbReference type="GO" id="GO:0042597">
    <property type="term" value="C:periplasmic space"/>
    <property type="evidence" value="ECO:0007669"/>
    <property type="project" value="UniProtKB-SubCell"/>
</dbReference>
<dbReference type="GO" id="GO:0016857">
    <property type="term" value="F:racemase and epimerase activity, acting on carbohydrates and derivatives"/>
    <property type="evidence" value="ECO:0007669"/>
    <property type="project" value="UniProtKB-UniRule"/>
</dbReference>
<dbReference type="FunFam" id="2.120.10.80:FF:000061">
    <property type="entry name" value="N-acetylneuraminate epimerase"/>
    <property type="match status" value="1"/>
</dbReference>
<dbReference type="FunFam" id="2.120.10.80:FF:000067">
    <property type="entry name" value="N-acetylneuraminate epimerase"/>
    <property type="match status" value="1"/>
</dbReference>
<dbReference type="Gene3D" id="2.120.10.80">
    <property type="entry name" value="Kelch-type beta propeller"/>
    <property type="match status" value="2"/>
</dbReference>
<dbReference type="HAMAP" id="MF_01195">
    <property type="entry name" value="NanM"/>
    <property type="match status" value="1"/>
</dbReference>
<dbReference type="InterPro" id="IPR015915">
    <property type="entry name" value="Kelch-typ_b-propeller"/>
</dbReference>
<dbReference type="InterPro" id="IPR056734">
    <property type="entry name" value="NANM"/>
</dbReference>
<dbReference type="InterPro" id="IPR019936">
    <property type="entry name" value="NanM_proteobact"/>
</dbReference>
<dbReference type="NCBIfam" id="TIGR03547">
    <property type="entry name" value="muta_rot_YjhT"/>
    <property type="match status" value="1"/>
</dbReference>
<dbReference type="NCBIfam" id="NF010730">
    <property type="entry name" value="PRK14131.1"/>
    <property type="match status" value="1"/>
</dbReference>
<dbReference type="PANTHER" id="PTHR45632:SF3">
    <property type="entry name" value="KELCH-LIKE PROTEIN 32"/>
    <property type="match status" value="1"/>
</dbReference>
<dbReference type="PANTHER" id="PTHR45632">
    <property type="entry name" value="LD33804P"/>
    <property type="match status" value="1"/>
</dbReference>
<dbReference type="Pfam" id="PF24996">
    <property type="entry name" value="NANM"/>
    <property type="match status" value="1"/>
</dbReference>
<dbReference type="SUPFAM" id="SSF117281">
    <property type="entry name" value="Kelch motif"/>
    <property type="match status" value="1"/>
</dbReference>
<gene>
    <name evidence="1" type="primary">nanM</name>
    <name type="ordered locus">SF4212</name>
    <name type="ordered locus">S4469</name>
</gene>